<comment type="function">
    <text evidence="1">Allows the formation of correctly charged Asn-tRNA(Asn) or Gln-tRNA(Gln) through the transamidation of misacylated Asp-tRNA(Asn) or Glu-tRNA(Gln) in organisms which lack either or both of asparaginyl-tRNA or glutaminyl-tRNA synthetases. The reaction takes place in the presence of glutamine and ATP through an activated phospho-Asp-tRNA(Asn) or phospho-Glu-tRNA(Gln).</text>
</comment>
<comment type="catalytic activity">
    <reaction evidence="1">
        <text>L-glutamyl-tRNA(Gln) + L-glutamine + ATP + H2O = L-glutaminyl-tRNA(Gln) + L-glutamate + ADP + phosphate + H(+)</text>
        <dbReference type="Rhea" id="RHEA:17521"/>
        <dbReference type="Rhea" id="RHEA-COMP:9681"/>
        <dbReference type="Rhea" id="RHEA-COMP:9684"/>
        <dbReference type="ChEBI" id="CHEBI:15377"/>
        <dbReference type="ChEBI" id="CHEBI:15378"/>
        <dbReference type="ChEBI" id="CHEBI:29985"/>
        <dbReference type="ChEBI" id="CHEBI:30616"/>
        <dbReference type="ChEBI" id="CHEBI:43474"/>
        <dbReference type="ChEBI" id="CHEBI:58359"/>
        <dbReference type="ChEBI" id="CHEBI:78520"/>
        <dbReference type="ChEBI" id="CHEBI:78521"/>
        <dbReference type="ChEBI" id="CHEBI:456216"/>
    </reaction>
</comment>
<comment type="catalytic activity">
    <reaction evidence="1">
        <text>L-aspartyl-tRNA(Asn) + L-glutamine + ATP + H2O = L-asparaginyl-tRNA(Asn) + L-glutamate + ADP + phosphate + 2 H(+)</text>
        <dbReference type="Rhea" id="RHEA:14513"/>
        <dbReference type="Rhea" id="RHEA-COMP:9674"/>
        <dbReference type="Rhea" id="RHEA-COMP:9677"/>
        <dbReference type="ChEBI" id="CHEBI:15377"/>
        <dbReference type="ChEBI" id="CHEBI:15378"/>
        <dbReference type="ChEBI" id="CHEBI:29985"/>
        <dbReference type="ChEBI" id="CHEBI:30616"/>
        <dbReference type="ChEBI" id="CHEBI:43474"/>
        <dbReference type="ChEBI" id="CHEBI:58359"/>
        <dbReference type="ChEBI" id="CHEBI:78515"/>
        <dbReference type="ChEBI" id="CHEBI:78516"/>
        <dbReference type="ChEBI" id="CHEBI:456216"/>
    </reaction>
</comment>
<comment type="subunit">
    <text evidence="1">Heterotrimer of A, B and C subunits.</text>
</comment>
<comment type="similarity">
    <text evidence="1">Belongs to the GatB/GatE family. GatB subfamily.</text>
</comment>
<keyword id="KW-0067">ATP-binding</keyword>
<keyword id="KW-0436">Ligase</keyword>
<keyword id="KW-0547">Nucleotide-binding</keyword>
<keyword id="KW-0648">Protein biosynthesis</keyword>
<dbReference type="EC" id="6.3.5.-" evidence="1"/>
<dbReference type="EMBL" id="AE017221">
    <property type="protein sequence ID" value="AAS81962.1"/>
    <property type="molecule type" value="Genomic_DNA"/>
</dbReference>
<dbReference type="RefSeq" id="WP_011173989.1">
    <property type="nucleotide sequence ID" value="NC_005835.1"/>
</dbReference>
<dbReference type="SMR" id="Q72H75"/>
<dbReference type="KEGG" id="tth:TT_C1620"/>
<dbReference type="eggNOG" id="COG0064">
    <property type="taxonomic scope" value="Bacteria"/>
</dbReference>
<dbReference type="HOGENOM" id="CLU_019240_0_0_0"/>
<dbReference type="OrthoDB" id="9804078at2"/>
<dbReference type="Proteomes" id="UP000000592">
    <property type="component" value="Chromosome"/>
</dbReference>
<dbReference type="GO" id="GO:0050566">
    <property type="term" value="F:asparaginyl-tRNA synthase (glutamine-hydrolyzing) activity"/>
    <property type="evidence" value="ECO:0007669"/>
    <property type="project" value="RHEA"/>
</dbReference>
<dbReference type="GO" id="GO:0005524">
    <property type="term" value="F:ATP binding"/>
    <property type="evidence" value="ECO:0007669"/>
    <property type="project" value="UniProtKB-KW"/>
</dbReference>
<dbReference type="GO" id="GO:0050567">
    <property type="term" value="F:glutaminyl-tRNA synthase (glutamine-hydrolyzing) activity"/>
    <property type="evidence" value="ECO:0007669"/>
    <property type="project" value="UniProtKB-UniRule"/>
</dbReference>
<dbReference type="GO" id="GO:0070681">
    <property type="term" value="P:glutaminyl-tRNAGln biosynthesis via transamidation"/>
    <property type="evidence" value="ECO:0007669"/>
    <property type="project" value="TreeGrafter"/>
</dbReference>
<dbReference type="GO" id="GO:0006412">
    <property type="term" value="P:translation"/>
    <property type="evidence" value="ECO:0007669"/>
    <property type="project" value="UniProtKB-UniRule"/>
</dbReference>
<dbReference type="FunFam" id="1.10.10.410:FF:000001">
    <property type="entry name" value="Aspartyl/glutamyl-tRNA(Asn/Gln) amidotransferase subunit B"/>
    <property type="match status" value="1"/>
</dbReference>
<dbReference type="Gene3D" id="1.10.10.410">
    <property type="match status" value="1"/>
</dbReference>
<dbReference type="HAMAP" id="MF_00121">
    <property type="entry name" value="GatB"/>
    <property type="match status" value="1"/>
</dbReference>
<dbReference type="InterPro" id="IPR017959">
    <property type="entry name" value="Asn/Gln-tRNA_amidoTrfase_suB/E"/>
</dbReference>
<dbReference type="InterPro" id="IPR006075">
    <property type="entry name" value="Asn/Gln-tRNA_Trfase_suB/E_cat"/>
</dbReference>
<dbReference type="InterPro" id="IPR018027">
    <property type="entry name" value="Asn/Gln_amidotransferase"/>
</dbReference>
<dbReference type="InterPro" id="IPR003789">
    <property type="entry name" value="Asn/Gln_tRNA_amidoTrase-B-like"/>
</dbReference>
<dbReference type="InterPro" id="IPR004413">
    <property type="entry name" value="GatB"/>
</dbReference>
<dbReference type="InterPro" id="IPR023168">
    <property type="entry name" value="GatB_Yqey_C_2"/>
</dbReference>
<dbReference type="InterPro" id="IPR017958">
    <property type="entry name" value="Gln-tRNA_amidoTrfase_suB_CS"/>
</dbReference>
<dbReference type="InterPro" id="IPR014746">
    <property type="entry name" value="Gln_synth/guanido_kin_cat_dom"/>
</dbReference>
<dbReference type="NCBIfam" id="TIGR00133">
    <property type="entry name" value="gatB"/>
    <property type="match status" value="1"/>
</dbReference>
<dbReference type="NCBIfam" id="NF004012">
    <property type="entry name" value="PRK05477.1-2"/>
    <property type="match status" value="1"/>
</dbReference>
<dbReference type="NCBIfam" id="NF004014">
    <property type="entry name" value="PRK05477.1-4"/>
    <property type="match status" value="1"/>
</dbReference>
<dbReference type="PANTHER" id="PTHR11659">
    <property type="entry name" value="GLUTAMYL-TRNA GLN AMIDOTRANSFERASE SUBUNIT B MITOCHONDRIAL AND PROKARYOTIC PET112-RELATED"/>
    <property type="match status" value="1"/>
</dbReference>
<dbReference type="PANTHER" id="PTHR11659:SF0">
    <property type="entry name" value="GLUTAMYL-TRNA(GLN) AMIDOTRANSFERASE SUBUNIT B, MITOCHONDRIAL"/>
    <property type="match status" value="1"/>
</dbReference>
<dbReference type="Pfam" id="PF02934">
    <property type="entry name" value="GatB_N"/>
    <property type="match status" value="1"/>
</dbReference>
<dbReference type="Pfam" id="PF02637">
    <property type="entry name" value="GatB_Yqey"/>
    <property type="match status" value="1"/>
</dbReference>
<dbReference type="SMART" id="SM00845">
    <property type="entry name" value="GatB_Yqey"/>
    <property type="match status" value="1"/>
</dbReference>
<dbReference type="SUPFAM" id="SSF89095">
    <property type="entry name" value="GatB/YqeY motif"/>
    <property type="match status" value="1"/>
</dbReference>
<dbReference type="SUPFAM" id="SSF55931">
    <property type="entry name" value="Glutamine synthetase/guanido kinase"/>
    <property type="match status" value="1"/>
</dbReference>
<dbReference type="PROSITE" id="PS01234">
    <property type="entry name" value="GATB"/>
    <property type="match status" value="1"/>
</dbReference>
<evidence type="ECO:0000255" key="1">
    <source>
        <dbReference type="HAMAP-Rule" id="MF_00121"/>
    </source>
</evidence>
<gene>
    <name evidence="1" type="primary">gatB</name>
    <name type="ordered locus">TT_C1620</name>
</gene>
<sequence>MYEAVIGLEVHLHLKTRTKMFCGCRADYFGAEPNTHTCPVCLGLPGALPVPNRVAVEHGLRLALALGAEVPERLVFHRKNYFYPDLPKNYQISQYDLPLGRGGSLPLGERRVRIKRLHLEEDAGKSLHLEGRTLLDLNRAGSPLIELVTEPDLKTPEEARLFLQRIQALVQTLGISDASPEEGKLRADVNVSVRRVGEPLGTKVEIKNLNSFKSVQRALEYEIRRQTEILRRGEKVKQATMGFEEGSGKTYPMRTKEEEADYRYFPEPDLPPVVIPRDWLEEVRRSLPELPWEKEARYRALGIKEKDAEVLAYTPSLARFLDQALPLGLASPQALANWLLADVAGLLHERGLRLEETRLSPEGLARLVGLFERGEVTSRVAKSLLPEVLEGQDPEALVRERGLKVVADEGALKALVAEAIAAMPEAAESVRQGKVKALDALVGQVMRKTRGQARPDLVRRLLLEALGVG</sequence>
<accession>Q72H75</accession>
<name>GATB_THET2</name>
<feature type="chain" id="PRO_0000241294" description="Aspartyl/glutamyl-tRNA(Asn/Gln) amidotransferase subunit B">
    <location>
        <begin position="1"/>
        <end position="469"/>
    </location>
</feature>
<proteinExistence type="inferred from homology"/>
<reference key="1">
    <citation type="journal article" date="2004" name="Nat. Biotechnol.">
        <title>The genome sequence of the extreme thermophile Thermus thermophilus.</title>
        <authorList>
            <person name="Henne A."/>
            <person name="Brueggemann H."/>
            <person name="Raasch C."/>
            <person name="Wiezer A."/>
            <person name="Hartsch T."/>
            <person name="Liesegang H."/>
            <person name="Johann A."/>
            <person name="Lienard T."/>
            <person name="Gohl O."/>
            <person name="Martinez-Arias R."/>
            <person name="Jacobi C."/>
            <person name="Starkuviene V."/>
            <person name="Schlenczeck S."/>
            <person name="Dencker S."/>
            <person name="Huber R."/>
            <person name="Klenk H.-P."/>
            <person name="Kramer W."/>
            <person name="Merkl R."/>
            <person name="Gottschalk G."/>
            <person name="Fritz H.-J."/>
        </authorList>
    </citation>
    <scope>NUCLEOTIDE SEQUENCE [LARGE SCALE GENOMIC DNA]</scope>
    <source>
        <strain>ATCC BAA-163 / DSM 7039 / HB27</strain>
    </source>
</reference>
<organism>
    <name type="scientific">Thermus thermophilus (strain ATCC BAA-163 / DSM 7039 / HB27)</name>
    <dbReference type="NCBI Taxonomy" id="262724"/>
    <lineage>
        <taxon>Bacteria</taxon>
        <taxon>Thermotogati</taxon>
        <taxon>Deinococcota</taxon>
        <taxon>Deinococci</taxon>
        <taxon>Thermales</taxon>
        <taxon>Thermaceae</taxon>
        <taxon>Thermus</taxon>
    </lineage>
</organism>
<protein>
    <recommendedName>
        <fullName evidence="1">Aspartyl/glutamyl-tRNA(Asn/Gln) amidotransferase subunit B</fullName>
        <shortName evidence="1">Asp/Glu-ADT subunit B</shortName>
        <ecNumber evidence="1">6.3.5.-</ecNumber>
    </recommendedName>
</protein>